<reference key="1">
    <citation type="journal article" date="2002" name="Nature">
        <title>Comparison of the genomes of two Xanthomonas pathogens with differing host specificities.</title>
        <authorList>
            <person name="da Silva A.C.R."/>
            <person name="Ferro J.A."/>
            <person name="Reinach F.C."/>
            <person name="Farah C.S."/>
            <person name="Furlan L.R."/>
            <person name="Quaggio R.B."/>
            <person name="Monteiro-Vitorello C.B."/>
            <person name="Van Sluys M.A."/>
            <person name="Almeida N.F. Jr."/>
            <person name="Alves L.M.C."/>
            <person name="do Amaral A.M."/>
            <person name="Bertolini M.C."/>
            <person name="Camargo L.E.A."/>
            <person name="Camarotte G."/>
            <person name="Cannavan F."/>
            <person name="Cardozo J."/>
            <person name="Chambergo F."/>
            <person name="Ciapina L.P."/>
            <person name="Cicarelli R.M.B."/>
            <person name="Coutinho L.L."/>
            <person name="Cursino-Santos J.R."/>
            <person name="El-Dorry H."/>
            <person name="Faria J.B."/>
            <person name="Ferreira A.J.S."/>
            <person name="Ferreira R.C.C."/>
            <person name="Ferro M.I.T."/>
            <person name="Formighieri E.F."/>
            <person name="Franco M.C."/>
            <person name="Greggio C.C."/>
            <person name="Gruber A."/>
            <person name="Katsuyama A.M."/>
            <person name="Kishi L.T."/>
            <person name="Leite R.P."/>
            <person name="Lemos E.G.M."/>
            <person name="Lemos M.V.F."/>
            <person name="Locali E.C."/>
            <person name="Machado M.A."/>
            <person name="Madeira A.M.B.N."/>
            <person name="Martinez-Rossi N.M."/>
            <person name="Martins E.C."/>
            <person name="Meidanis J."/>
            <person name="Menck C.F.M."/>
            <person name="Miyaki C.Y."/>
            <person name="Moon D.H."/>
            <person name="Moreira L.M."/>
            <person name="Novo M.T.M."/>
            <person name="Okura V.K."/>
            <person name="Oliveira M.C."/>
            <person name="Oliveira V.R."/>
            <person name="Pereira H.A."/>
            <person name="Rossi A."/>
            <person name="Sena J.A.D."/>
            <person name="Silva C."/>
            <person name="de Souza R.F."/>
            <person name="Spinola L.A.F."/>
            <person name="Takita M.A."/>
            <person name="Tamura R.E."/>
            <person name="Teixeira E.C."/>
            <person name="Tezza R.I.D."/>
            <person name="Trindade dos Santos M."/>
            <person name="Truffi D."/>
            <person name="Tsai S.M."/>
            <person name="White F.F."/>
            <person name="Setubal J.C."/>
            <person name="Kitajima J.P."/>
        </authorList>
    </citation>
    <scope>NUCLEOTIDE SEQUENCE [LARGE SCALE GENOMIC DNA]</scope>
    <source>
        <strain>ATCC 33913 / DSM 3586 / NCPPB 528 / LMG 568 / P 25</strain>
    </source>
</reference>
<keyword id="KW-0028">Amino-acid biosynthesis</keyword>
<keyword id="KW-0055">Arginine biosynthesis</keyword>
<keyword id="KW-0963">Cytoplasm</keyword>
<keyword id="KW-0456">Lyase</keyword>
<keyword id="KW-1185">Reference proteome</keyword>
<comment type="catalytic activity">
    <reaction evidence="1">
        <text>2-(N(omega)-L-arginino)succinate = fumarate + L-arginine</text>
        <dbReference type="Rhea" id="RHEA:24020"/>
        <dbReference type="ChEBI" id="CHEBI:29806"/>
        <dbReference type="ChEBI" id="CHEBI:32682"/>
        <dbReference type="ChEBI" id="CHEBI:57472"/>
        <dbReference type="EC" id="4.3.2.1"/>
    </reaction>
</comment>
<comment type="pathway">
    <text evidence="1">Amino-acid biosynthesis; L-arginine biosynthesis; L-arginine from L-ornithine and carbamoyl phosphate: step 3/3.</text>
</comment>
<comment type="subcellular location">
    <subcellularLocation>
        <location evidence="1">Cytoplasm</location>
    </subcellularLocation>
</comment>
<comment type="similarity">
    <text evidence="1">Belongs to the lyase 1 family. Argininosuccinate lyase subfamily.</text>
</comment>
<evidence type="ECO:0000255" key="1">
    <source>
        <dbReference type="HAMAP-Rule" id="MF_00006"/>
    </source>
</evidence>
<feature type="chain" id="PRO_0000137852" description="Argininosuccinate lyase">
    <location>
        <begin position="1"/>
        <end position="431"/>
    </location>
</feature>
<organism>
    <name type="scientific">Xanthomonas campestris pv. campestris (strain ATCC 33913 / DSM 3586 / NCPPB 528 / LMG 568 / P 25)</name>
    <dbReference type="NCBI Taxonomy" id="190485"/>
    <lineage>
        <taxon>Bacteria</taxon>
        <taxon>Pseudomonadati</taxon>
        <taxon>Pseudomonadota</taxon>
        <taxon>Gammaproteobacteria</taxon>
        <taxon>Lysobacterales</taxon>
        <taxon>Lysobacteraceae</taxon>
        <taxon>Xanthomonas</taxon>
    </lineage>
</organism>
<accession>Q8P8J9</accession>
<sequence length="431" mass="46319">MTNLLWQKPGVAVDAKIQTFLAGDDVILDREFFLYDIAASKAHAQGLQHIGILSLEELGGLSEQLDLLADDFRSGAFVLDAHYEDCHSAIEARLTECLGDAGRKIHTGRSRNDQILVATRLWLKDKLQRVAALSTEVAKVALDRAQAEAELPVPGYTHIQRAVVSSAGMWWAGWAEAFIDNAVRANDTFKLVDTNPLGTAAGYGVNLPLDRAHTTAELGFARLQVSPIYAQLSRGKFELAALEALGGATLDLRRIAWDLSLFTSGEFAFVALPAQYTTGSSIMPNKRNPDVIELMRATHASVAAARTEIEQLLSLPSGYHRDLQSSKGAIVHGFARGLAALELLPALLANLEWRPDKLRSAIDSGMYATDVAVEAAVAGVPFRDAYKAAAAASDSAGQGRTPEGSLAARVSPGAAADLQLDVLRARWEALQ</sequence>
<name>ARLY_XANCP</name>
<dbReference type="EC" id="4.3.2.1" evidence="1"/>
<dbReference type="EMBL" id="AE008922">
    <property type="protein sequence ID" value="AAM41521.1"/>
    <property type="molecule type" value="Genomic_DNA"/>
</dbReference>
<dbReference type="RefSeq" id="NP_637597.1">
    <property type="nucleotide sequence ID" value="NC_003902.1"/>
</dbReference>
<dbReference type="RefSeq" id="WP_011037386.1">
    <property type="nucleotide sequence ID" value="NC_003902.1"/>
</dbReference>
<dbReference type="SMR" id="Q8P8J9"/>
<dbReference type="STRING" id="190485.XCC2242"/>
<dbReference type="EnsemblBacteria" id="AAM41521">
    <property type="protein sequence ID" value="AAM41521"/>
    <property type="gene ID" value="XCC2242"/>
</dbReference>
<dbReference type="KEGG" id="xcc:XCC2242"/>
<dbReference type="PATRIC" id="fig|190485.4.peg.2392"/>
<dbReference type="eggNOG" id="COG0165">
    <property type="taxonomic scope" value="Bacteria"/>
</dbReference>
<dbReference type="HOGENOM" id="CLU_027272_2_0_6"/>
<dbReference type="OrthoDB" id="9769623at2"/>
<dbReference type="UniPathway" id="UPA00068">
    <property type="reaction ID" value="UER00114"/>
</dbReference>
<dbReference type="Proteomes" id="UP000001010">
    <property type="component" value="Chromosome"/>
</dbReference>
<dbReference type="GO" id="GO:0005829">
    <property type="term" value="C:cytosol"/>
    <property type="evidence" value="ECO:0000318"/>
    <property type="project" value="GO_Central"/>
</dbReference>
<dbReference type="GO" id="GO:0004056">
    <property type="term" value="F:argininosuccinate lyase activity"/>
    <property type="evidence" value="ECO:0000318"/>
    <property type="project" value="GO_Central"/>
</dbReference>
<dbReference type="GO" id="GO:0042450">
    <property type="term" value="P:arginine biosynthetic process via ornithine"/>
    <property type="evidence" value="ECO:0000318"/>
    <property type="project" value="GO_Central"/>
</dbReference>
<dbReference type="GO" id="GO:0006526">
    <property type="term" value="P:L-arginine biosynthetic process"/>
    <property type="evidence" value="ECO:0007669"/>
    <property type="project" value="UniProtKB-UniRule"/>
</dbReference>
<dbReference type="Gene3D" id="1.10.40.30">
    <property type="entry name" value="Fumarase/aspartase (C-terminal domain)"/>
    <property type="match status" value="1"/>
</dbReference>
<dbReference type="Gene3D" id="1.20.200.10">
    <property type="entry name" value="Fumarase/aspartase (Central domain)"/>
    <property type="match status" value="1"/>
</dbReference>
<dbReference type="Gene3D" id="1.10.275.10">
    <property type="entry name" value="Fumarase/aspartase (N-terminal domain)"/>
    <property type="match status" value="1"/>
</dbReference>
<dbReference type="HAMAP" id="MF_00006">
    <property type="entry name" value="Arg_succ_lyase"/>
    <property type="match status" value="1"/>
</dbReference>
<dbReference type="InterPro" id="IPR009049">
    <property type="entry name" value="Argininosuccinate_lyase"/>
</dbReference>
<dbReference type="InterPro" id="IPR024083">
    <property type="entry name" value="Fumarase/histidase_N"/>
</dbReference>
<dbReference type="InterPro" id="IPR020557">
    <property type="entry name" value="Fumarate_lyase_CS"/>
</dbReference>
<dbReference type="InterPro" id="IPR000362">
    <property type="entry name" value="Fumarate_lyase_fam"/>
</dbReference>
<dbReference type="InterPro" id="IPR022761">
    <property type="entry name" value="Fumarate_lyase_N"/>
</dbReference>
<dbReference type="InterPro" id="IPR008948">
    <property type="entry name" value="L-Aspartase-like"/>
</dbReference>
<dbReference type="PANTHER" id="PTHR43814">
    <property type="entry name" value="ARGININOSUCCINATE LYASE"/>
    <property type="match status" value="1"/>
</dbReference>
<dbReference type="PANTHER" id="PTHR43814:SF1">
    <property type="entry name" value="ARGININOSUCCINATE LYASE"/>
    <property type="match status" value="1"/>
</dbReference>
<dbReference type="Pfam" id="PF00206">
    <property type="entry name" value="Lyase_1"/>
    <property type="match status" value="1"/>
</dbReference>
<dbReference type="PRINTS" id="PR00145">
    <property type="entry name" value="ARGSUCLYASE"/>
</dbReference>
<dbReference type="PRINTS" id="PR00149">
    <property type="entry name" value="FUMRATELYASE"/>
</dbReference>
<dbReference type="SUPFAM" id="SSF48557">
    <property type="entry name" value="L-aspartase-like"/>
    <property type="match status" value="1"/>
</dbReference>
<dbReference type="PROSITE" id="PS00163">
    <property type="entry name" value="FUMARATE_LYASES"/>
    <property type="match status" value="1"/>
</dbReference>
<proteinExistence type="inferred from homology"/>
<protein>
    <recommendedName>
        <fullName evidence="1">Argininosuccinate lyase</fullName>
        <shortName evidence="1">ASAL</shortName>
        <ecNumber evidence="1">4.3.2.1</ecNumber>
    </recommendedName>
    <alternativeName>
        <fullName evidence="1">Arginosuccinase</fullName>
    </alternativeName>
</protein>
<gene>
    <name evidence="1" type="primary">argH</name>
    <name type="ordered locus">XCC2242</name>
</gene>